<evidence type="ECO:0000255" key="1">
    <source>
        <dbReference type="HAMAP-Rule" id="MF_00598"/>
    </source>
</evidence>
<proteinExistence type="inferred from homology"/>
<comment type="similarity">
    <text evidence="1">Belongs to the Smg family.</text>
</comment>
<name>SMG_ALIFM</name>
<dbReference type="EMBL" id="CP001139">
    <property type="protein sequence ID" value="ACH65120.1"/>
    <property type="molecule type" value="Genomic_DNA"/>
</dbReference>
<dbReference type="RefSeq" id="WP_005421519.1">
    <property type="nucleotide sequence ID" value="NC_011184.1"/>
</dbReference>
<dbReference type="SMR" id="B5FCW3"/>
<dbReference type="KEGG" id="vfm:VFMJ11_2671"/>
<dbReference type="HOGENOM" id="CLU_133242_0_0_6"/>
<dbReference type="Proteomes" id="UP000001857">
    <property type="component" value="Chromosome I"/>
</dbReference>
<dbReference type="HAMAP" id="MF_00598">
    <property type="entry name" value="Smg"/>
    <property type="match status" value="1"/>
</dbReference>
<dbReference type="InterPro" id="IPR007456">
    <property type="entry name" value="Smg"/>
</dbReference>
<dbReference type="NCBIfam" id="NF002897">
    <property type="entry name" value="PRK03430.1"/>
    <property type="match status" value="1"/>
</dbReference>
<dbReference type="PANTHER" id="PTHR38692">
    <property type="entry name" value="PROTEIN SMG"/>
    <property type="match status" value="1"/>
</dbReference>
<dbReference type="PANTHER" id="PTHR38692:SF1">
    <property type="entry name" value="PROTEIN SMG"/>
    <property type="match status" value="1"/>
</dbReference>
<dbReference type="Pfam" id="PF04361">
    <property type="entry name" value="DUF494"/>
    <property type="match status" value="1"/>
</dbReference>
<organism>
    <name type="scientific">Aliivibrio fischeri (strain MJ11)</name>
    <name type="common">Vibrio fischeri</name>
    <dbReference type="NCBI Taxonomy" id="388396"/>
    <lineage>
        <taxon>Bacteria</taxon>
        <taxon>Pseudomonadati</taxon>
        <taxon>Pseudomonadota</taxon>
        <taxon>Gammaproteobacteria</taxon>
        <taxon>Vibrionales</taxon>
        <taxon>Vibrionaceae</taxon>
        <taxon>Aliivibrio</taxon>
    </lineage>
</organism>
<protein>
    <recommendedName>
        <fullName evidence="1">Protein Smg homolog</fullName>
    </recommendedName>
</protein>
<accession>B5FCW3</accession>
<feature type="chain" id="PRO_1000129910" description="Protein Smg homolog">
    <location>
        <begin position="1"/>
        <end position="157"/>
    </location>
</feature>
<reference key="1">
    <citation type="submission" date="2008-08" db="EMBL/GenBank/DDBJ databases">
        <title>Complete sequence of Vibrio fischeri strain MJ11.</title>
        <authorList>
            <person name="Mandel M.J."/>
            <person name="Stabb E.V."/>
            <person name="Ruby E.G."/>
            <person name="Ferriera S."/>
            <person name="Johnson J."/>
            <person name="Kravitz S."/>
            <person name="Beeson K."/>
            <person name="Sutton G."/>
            <person name="Rogers Y.-H."/>
            <person name="Friedman R."/>
            <person name="Frazier M."/>
            <person name="Venter J.C."/>
        </authorList>
    </citation>
    <scope>NUCLEOTIDE SEQUENCE [LARGE SCALE GENOMIC DNA]</scope>
    <source>
        <strain>MJ11</strain>
    </source>
</reference>
<gene>
    <name evidence="1" type="primary">smg</name>
    <name type="ordered locus">VFMJ11_2671</name>
</gene>
<sequence length="157" mass="18132">MMDVLMYLFETYIHSDVELNVEQEKLEDELLKAGFHQEAVYKALDWLEDLARLQDTDEHARVATGTSTSMRIYTQQEIDGINTACRGFLLFLEQIKVLTSETREMVIEQVMALETDELSLDDLKWVVLMVLFNVPGQESAYTQMEELLYTSDVGLTH</sequence>